<feature type="signal peptide" evidence="2">
    <location>
        <begin position="1"/>
        <end position="17"/>
    </location>
</feature>
<feature type="propeptide" id="PRO_0000393622" evidence="2">
    <location>
        <begin position="18"/>
        <end position="30"/>
    </location>
</feature>
<feature type="chain" id="PRO_0000393623" description="Endopolygalacturonase I">
    <location>
        <begin position="31"/>
        <end position="367"/>
    </location>
</feature>
<feature type="repeat" description="PbH1 1">
    <location>
        <begin position="161"/>
        <end position="191"/>
    </location>
</feature>
<feature type="repeat" description="PbH1 2">
    <location>
        <begin position="192"/>
        <end position="213"/>
    </location>
</feature>
<feature type="repeat" description="PbH1 3">
    <location>
        <begin position="214"/>
        <end position="234"/>
    </location>
</feature>
<feature type="repeat" description="PbH1 4">
    <location>
        <begin position="243"/>
        <end position="264"/>
    </location>
</feature>
<feature type="repeat" description="PbH1 5">
    <location>
        <begin position="272"/>
        <end position="294"/>
    </location>
</feature>
<feature type="active site" description="Proton donor" evidence="3">
    <location>
        <position position="206"/>
    </location>
</feature>
<feature type="active site" evidence="3">
    <location>
        <position position="228"/>
    </location>
</feature>
<feature type="glycosylation site" description="N-linked (GlcNAc...) asparagine" evidence="2">
    <location>
        <position position="279"/>
    </location>
</feature>
<feature type="disulfide bond" evidence="1">
    <location>
        <begin position="34"/>
        <end position="49"/>
    </location>
</feature>
<feature type="disulfide bond" evidence="1">
    <location>
        <begin position="208"/>
        <end position="224"/>
    </location>
</feature>
<feature type="disulfide bond" evidence="1">
    <location>
        <begin position="334"/>
        <end position="339"/>
    </location>
</feature>
<feature type="disulfide bond" evidence="1">
    <location>
        <begin position="358"/>
        <end position="367"/>
    </location>
</feature>
<feature type="sequence conflict" description="In Ref. 1; BAA34782." evidence="5" ref="1">
    <original>A</original>
    <variation>G</variation>
    <location>
        <position position="136"/>
    </location>
</feature>
<feature type="sequence conflict" description="In Ref. 1; BAA34782." evidence="5" ref="1">
    <original>S</original>
    <variation>Y</variation>
    <location>
        <position position="152"/>
    </location>
</feature>
<protein>
    <recommendedName>
        <fullName>Endopolygalacturonase I</fullName>
        <ecNumber>3.2.1.15</ecNumber>
    </recommendedName>
    <alternativeName>
        <fullName>Pectinase 1</fullName>
    </alternativeName>
    <alternativeName>
        <fullName>Polygalacturonase I</fullName>
        <shortName>PG-I</shortName>
    </alternativeName>
</protein>
<reference key="1">
    <citation type="journal article" date="1998" name="Appl. Microbiol. Biotechnol.">
        <title>Utilization of the TEF1-alpha gene (TEF1) promoter for expression of polygalacturonase genes, pgaA and pgaB, in Aspergillus oryzae.</title>
        <authorList>
            <person name="Kitamoto N."/>
            <person name="Matsui J."/>
            <person name="Kawai Y."/>
            <person name="Kato A."/>
            <person name="Yoshino S."/>
            <person name="Ohmiya K."/>
            <person name="Tsukagoshi N."/>
        </authorList>
    </citation>
    <scope>NUCLEOTIDE SEQUENCE [GENOMIC DNA]</scope>
    <scope>FUNCTION</scope>
    <scope>BIOPHYSICOCHEMICAL PROPERTIES</scope>
    <source>
        <strain>KBN616</strain>
    </source>
</reference>
<reference key="2">
    <citation type="journal article" date="2005" name="Nature">
        <title>Genome sequencing and analysis of Aspergillus oryzae.</title>
        <authorList>
            <person name="Machida M."/>
            <person name="Asai K."/>
            <person name="Sano M."/>
            <person name="Tanaka T."/>
            <person name="Kumagai T."/>
            <person name="Terai G."/>
            <person name="Kusumoto K."/>
            <person name="Arima T."/>
            <person name="Akita O."/>
            <person name="Kashiwagi Y."/>
            <person name="Abe K."/>
            <person name="Gomi K."/>
            <person name="Horiuchi H."/>
            <person name="Kitamoto K."/>
            <person name="Kobayashi T."/>
            <person name="Takeuchi M."/>
            <person name="Denning D.W."/>
            <person name="Galagan J.E."/>
            <person name="Nierman W.C."/>
            <person name="Yu J."/>
            <person name="Archer D.B."/>
            <person name="Bennett J.W."/>
            <person name="Bhatnagar D."/>
            <person name="Cleveland T.E."/>
            <person name="Fedorova N.D."/>
            <person name="Gotoh O."/>
            <person name="Horikawa H."/>
            <person name="Hosoyama A."/>
            <person name="Ichinomiya M."/>
            <person name="Igarashi R."/>
            <person name="Iwashita K."/>
            <person name="Juvvadi P.R."/>
            <person name="Kato M."/>
            <person name="Kato Y."/>
            <person name="Kin T."/>
            <person name="Kokubun A."/>
            <person name="Maeda H."/>
            <person name="Maeyama N."/>
            <person name="Maruyama J."/>
            <person name="Nagasaki H."/>
            <person name="Nakajima T."/>
            <person name="Oda K."/>
            <person name="Okada K."/>
            <person name="Paulsen I."/>
            <person name="Sakamoto K."/>
            <person name="Sawano T."/>
            <person name="Takahashi M."/>
            <person name="Takase K."/>
            <person name="Terabayashi Y."/>
            <person name="Wortman J.R."/>
            <person name="Yamada O."/>
            <person name="Yamagata Y."/>
            <person name="Anazawa H."/>
            <person name="Hata Y."/>
            <person name="Koide Y."/>
            <person name="Komori T."/>
            <person name="Koyama Y."/>
            <person name="Minetoki T."/>
            <person name="Suharnan S."/>
            <person name="Tanaka A."/>
            <person name="Isono K."/>
            <person name="Kuhara S."/>
            <person name="Ogasawara N."/>
            <person name="Kikuchi H."/>
        </authorList>
    </citation>
    <scope>NUCLEOTIDE SEQUENCE [LARGE SCALE GENOMIC DNA]</scope>
    <source>
        <strain>ATCC 42149 / RIB 40</strain>
    </source>
</reference>
<comment type="function">
    <text evidence="4">Involved in maceration and soft-rotting of plant tissue. Hydrolyzes the 1,4-alpha glycosidic bonds of de-esterified pectate in the smooth region of the plant cell wall.</text>
</comment>
<comment type="catalytic activity">
    <reaction>
        <text>(1,4-alpha-D-galacturonosyl)n+m + H2O = (1,4-alpha-D-galacturonosyl)n + (1,4-alpha-D-galacturonosyl)m.</text>
        <dbReference type="EC" id="3.2.1.15"/>
    </reaction>
</comment>
<comment type="biophysicochemical properties">
    <phDependence>
        <text evidence="4">Optimum pH is 5.0: Stable between pH 3.0 and 7.0.</text>
    </phDependence>
    <temperatureDependence>
        <text evidence="4">Optimum temperature is 55 degrees Celsius.</text>
    </temperatureDependence>
</comment>
<comment type="subcellular location">
    <subcellularLocation>
        <location evidence="5">Secreted</location>
    </subcellularLocation>
</comment>
<comment type="similarity">
    <text evidence="5">Belongs to the glycosyl hydrolase 28 family.</text>
</comment>
<dbReference type="EC" id="3.2.1.15"/>
<dbReference type="EMBL" id="AB007769">
    <property type="protein sequence ID" value="BAA34782.1"/>
    <property type="molecule type" value="Genomic_DNA"/>
</dbReference>
<dbReference type="EMBL" id="BA000051">
    <property type="protein sequence ID" value="BAE58951.1"/>
    <property type="molecule type" value="Genomic_DNA"/>
</dbReference>
<dbReference type="RefSeq" id="XP_001820953.1">
    <property type="nucleotide sequence ID" value="XM_001820901.2"/>
</dbReference>
<dbReference type="SMR" id="Q2UHL4"/>
<dbReference type="STRING" id="510516.Q2UHL4"/>
<dbReference type="CAZy" id="GH28">
    <property type="family name" value="Glycoside Hydrolase Family 28"/>
</dbReference>
<dbReference type="GlyCosmos" id="Q2UHL4">
    <property type="glycosylation" value="1 site, No reported glycans"/>
</dbReference>
<dbReference type="EnsemblFungi" id="BAE58951">
    <property type="protein sequence ID" value="BAE58951"/>
    <property type="gene ID" value="AO090023000401"/>
</dbReference>
<dbReference type="GeneID" id="5992955"/>
<dbReference type="KEGG" id="aor:AO090023000401"/>
<dbReference type="VEuPathDB" id="FungiDB:AO090023000401"/>
<dbReference type="HOGENOM" id="CLU_040116_0_0_1"/>
<dbReference type="OMA" id="EGACADW"/>
<dbReference type="OrthoDB" id="98443at5052"/>
<dbReference type="Proteomes" id="UP000006564">
    <property type="component" value="Chromosome 3"/>
</dbReference>
<dbReference type="GO" id="GO:0005576">
    <property type="term" value="C:extracellular region"/>
    <property type="evidence" value="ECO:0000314"/>
    <property type="project" value="UniProtKB"/>
</dbReference>
<dbReference type="GO" id="GO:0047911">
    <property type="term" value="F:galacturan 1,4-alpha-galacturonidase activity"/>
    <property type="evidence" value="ECO:0000314"/>
    <property type="project" value="UniProtKB"/>
</dbReference>
<dbReference type="GO" id="GO:0004650">
    <property type="term" value="F:polygalacturonase activity"/>
    <property type="evidence" value="ECO:0000314"/>
    <property type="project" value="UniProtKB"/>
</dbReference>
<dbReference type="GO" id="GO:0071555">
    <property type="term" value="P:cell wall organization"/>
    <property type="evidence" value="ECO:0007669"/>
    <property type="project" value="UniProtKB-KW"/>
</dbReference>
<dbReference type="GO" id="GO:0045490">
    <property type="term" value="P:pectin catabolic process"/>
    <property type="evidence" value="ECO:0000314"/>
    <property type="project" value="UniProtKB"/>
</dbReference>
<dbReference type="FunFam" id="2.160.20.10:FF:000002">
    <property type="entry name" value="Endopolygalacturonase D"/>
    <property type="match status" value="1"/>
</dbReference>
<dbReference type="Gene3D" id="2.160.20.10">
    <property type="entry name" value="Single-stranded right-handed beta-helix, Pectin lyase-like"/>
    <property type="match status" value="1"/>
</dbReference>
<dbReference type="InterPro" id="IPR000743">
    <property type="entry name" value="Glyco_hydro_28"/>
</dbReference>
<dbReference type="InterPro" id="IPR050434">
    <property type="entry name" value="Glycosyl_hydrlase_28"/>
</dbReference>
<dbReference type="InterPro" id="IPR006626">
    <property type="entry name" value="PbH1"/>
</dbReference>
<dbReference type="InterPro" id="IPR012334">
    <property type="entry name" value="Pectin_lyas_fold"/>
</dbReference>
<dbReference type="InterPro" id="IPR011050">
    <property type="entry name" value="Pectin_lyase_fold/virulence"/>
</dbReference>
<dbReference type="PANTHER" id="PTHR31884:SF13">
    <property type="entry name" value="ENDOPOLYGALACTURONASE B"/>
    <property type="match status" value="1"/>
</dbReference>
<dbReference type="PANTHER" id="PTHR31884">
    <property type="entry name" value="POLYGALACTURONASE"/>
    <property type="match status" value="1"/>
</dbReference>
<dbReference type="Pfam" id="PF00295">
    <property type="entry name" value="Glyco_hydro_28"/>
    <property type="match status" value="1"/>
</dbReference>
<dbReference type="SMART" id="SM00710">
    <property type="entry name" value="PbH1"/>
    <property type="match status" value="5"/>
</dbReference>
<dbReference type="SUPFAM" id="SSF51126">
    <property type="entry name" value="Pectin lyase-like"/>
    <property type="match status" value="1"/>
</dbReference>
<dbReference type="PROSITE" id="PS00502">
    <property type="entry name" value="POLYGALACTURONASE"/>
    <property type="match status" value="1"/>
</dbReference>
<organism>
    <name type="scientific">Aspergillus oryzae (strain ATCC 42149 / RIB 40)</name>
    <name type="common">Yellow koji mold</name>
    <dbReference type="NCBI Taxonomy" id="510516"/>
    <lineage>
        <taxon>Eukaryota</taxon>
        <taxon>Fungi</taxon>
        <taxon>Dikarya</taxon>
        <taxon>Ascomycota</taxon>
        <taxon>Pezizomycotina</taxon>
        <taxon>Eurotiomycetes</taxon>
        <taxon>Eurotiomycetidae</taxon>
        <taxon>Eurotiales</taxon>
        <taxon>Aspergillaceae</taxon>
        <taxon>Aspergillus</taxon>
        <taxon>Aspergillus subgen. Circumdati</taxon>
    </lineage>
</organism>
<accession>Q2UHL4</accession>
<accession>O93789</accession>
<gene>
    <name type="primary">pgaI</name>
    <name type="synonym">pg1</name>
    <name type="synonym">pga1</name>
    <name type="synonym">pgaB</name>
    <name type="ORF">AO090023000401</name>
</gene>
<sequence length="367" mass="37798">MHFQLLGLAALGSLAAAAPAPSRTSELVERGSSCTFTSAAQASASAKSCSNIVLKNIAVPAGETLDLSKAKDGATITFEGTTTFGYKEWKGPLIRFGGNKITVTQAAGAVIDGQGSRWWDGKGTNGGKTKPKFIYAHKLQSSTIKGLHVKNSPVQVFSVQGNDVHLTDITIDNSDGDNNGGHNTDAFDVSESNGVYITGANVKNQDDCLAINSGENIEFTGATCSGGHGISIGSIGNRDSNTVKNVKVADSTVVDSDNGIRIKTISGATGSVSGVTYENITLKNIKKNGIVIEQDYKNGGPTGKPTTGVPITDLTVNGVTGSVASKATPVYILCGKGSCSDWTWKGVSISGGKKSDKCQNIPSGASC</sequence>
<proteinExistence type="evidence at protein level"/>
<name>PGLR1_ASPOR</name>
<keyword id="KW-0961">Cell wall biogenesis/degradation</keyword>
<keyword id="KW-1015">Disulfide bond</keyword>
<keyword id="KW-0325">Glycoprotein</keyword>
<keyword id="KW-0326">Glycosidase</keyword>
<keyword id="KW-0378">Hydrolase</keyword>
<keyword id="KW-1185">Reference proteome</keyword>
<keyword id="KW-0677">Repeat</keyword>
<keyword id="KW-0964">Secreted</keyword>
<keyword id="KW-0732">Signal</keyword>
<keyword id="KW-0865">Zymogen</keyword>
<evidence type="ECO:0000250" key="1"/>
<evidence type="ECO:0000255" key="2"/>
<evidence type="ECO:0000255" key="3">
    <source>
        <dbReference type="PROSITE-ProRule" id="PRU10052"/>
    </source>
</evidence>
<evidence type="ECO:0000269" key="4">
    <source>
    </source>
</evidence>
<evidence type="ECO:0000305" key="5"/>